<keyword id="KW-0012">Acyltransferase</keyword>
<keyword id="KW-0963">Cytoplasm</keyword>
<keyword id="KW-0408">Iron</keyword>
<keyword id="KW-0479">Metal-binding</keyword>
<keyword id="KW-1185">Reference proteome</keyword>
<keyword id="KW-0808">Transferase</keyword>
<keyword id="KW-0819">tRNA processing</keyword>
<name>TSAD_MYCAP</name>
<sequence length="309" mass="34291">MKILGIETSHDDTSIAILENNKVVALETISQVDIFKEFGGTIPEISSREHVKNINLILEILIKKHDLSTIDYVAYTKEPGLVGTLQIGYLFANAVSLAYNKPIIPINHLAGHFYSCAIDHEINYPSLCLLVSGGHTQLMLINNPNDFQIIGQTLDDAVGEAFDKVSSKLQLGFPGGPIIDKIYKNYNGEFIKFTEPHAPGEYNFSFSGLKSQVINYYHNKIQRNEAIDINQIAASFQDCAVSYLINQTKKALRKYNVKSLVLAGGVSANSELRKRFLEISNIAIIPDLKYATDNGAMIASCAYQMLKEK</sequence>
<evidence type="ECO:0000255" key="1">
    <source>
        <dbReference type="HAMAP-Rule" id="MF_01445"/>
    </source>
</evidence>
<feature type="chain" id="PRO_1000145999" description="tRNA N6-adenosine threonylcarbamoyltransferase">
    <location>
        <begin position="1"/>
        <end position="309"/>
    </location>
</feature>
<feature type="binding site" evidence="1">
    <location>
        <position position="108"/>
    </location>
    <ligand>
        <name>Fe cation</name>
        <dbReference type="ChEBI" id="CHEBI:24875"/>
    </ligand>
</feature>
<feature type="binding site" evidence="1">
    <location>
        <position position="112"/>
    </location>
    <ligand>
        <name>Fe cation</name>
        <dbReference type="ChEBI" id="CHEBI:24875"/>
    </ligand>
</feature>
<feature type="binding site" evidence="1">
    <location>
        <begin position="130"/>
        <end position="134"/>
    </location>
    <ligand>
        <name>substrate</name>
    </ligand>
</feature>
<feature type="binding site" evidence="1">
    <location>
        <position position="163"/>
    </location>
    <ligand>
        <name>substrate</name>
    </ligand>
</feature>
<feature type="binding site" evidence="1">
    <location>
        <position position="176"/>
    </location>
    <ligand>
        <name>substrate</name>
    </ligand>
</feature>
<feature type="binding site" evidence="1">
    <location>
        <position position="180"/>
    </location>
    <ligand>
        <name>substrate</name>
    </ligand>
</feature>
<feature type="binding site" evidence="1">
    <location>
        <position position="269"/>
    </location>
    <ligand>
        <name>substrate</name>
    </ligand>
</feature>
<feature type="binding site" evidence="1">
    <location>
        <position position="293"/>
    </location>
    <ligand>
        <name>Fe cation</name>
        <dbReference type="ChEBI" id="CHEBI:24875"/>
    </ligand>
</feature>
<proteinExistence type="inferred from homology"/>
<accession>A5IYB2</accession>
<protein>
    <recommendedName>
        <fullName evidence="1">tRNA N6-adenosine threonylcarbamoyltransferase</fullName>
        <ecNumber evidence="1">2.3.1.234</ecNumber>
    </recommendedName>
    <alternativeName>
        <fullName evidence="1">N6-L-threonylcarbamoyladenine synthase</fullName>
        <shortName evidence="1">t(6)A synthase</shortName>
    </alternativeName>
    <alternativeName>
        <fullName evidence="1">t(6)A37 threonylcarbamoyladenosine biosynthesis protein TsaD</fullName>
    </alternativeName>
    <alternativeName>
        <fullName evidence="1">tRNA threonylcarbamoyladenosine biosynthesis protein TsaD</fullName>
    </alternativeName>
</protein>
<gene>
    <name evidence="1" type="primary">tsaD</name>
    <name type="synonym">gcp</name>
    <name type="ordered locus">MAG3230</name>
</gene>
<comment type="function">
    <text evidence="1">Required for the formation of a threonylcarbamoyl group on adenosine at position 37 (t(6)A37) in tRNAs that read codons beginning with adenine. Is involved in the transfer of the threonylcarbamoyl moiety of threonylcarbamoyl-AMP (TC-AMP) to the N6 group of A37, together with TsaE and TsaB. TsaD likely plays a direct catalytic role in this reaction.</text>
</comment>
<comment type="catalytic activity">
    <reaction evidence="1">
        <text>L-threonylcarbamoyladenylate + adenosine(37) in tRNA = N(6)-L-threonylcarbamoyladenosine(37) in tRNA + AMP + H(+)</text>
        <dbReference type="Rhea" id="RHEA:37059"/>
        <dbReference type="Rhea" id="RHEA-COMP:10162"/>
        <dbReference type="Rhea" id="RHEA-COMP:10163"/>
        <dbReference type="ChEBI" id="CHEBI:15378"/>
        <dbReference type="ChEBI" id="CHEBI:73682"/>
        <dbReference type="ChEBI" id="CHEBI:74411"/>
        <dbReference type="ChEBI" id="CHEBI:74418"/>
        <dbReference type="ChEBI" id="CHEBI:456215"/>
        <dbReference type="EC" id="2.3.1.234"/>
    </reaction>
</comment>
<comment type="cofactor">
    <cofactor evidence="1">
        <name>Fe(2+)</name>
        <dbReference type="ChEBI" id="CHEBI:29033"/>
    </cofactor>
    <text evidence="1">Binds 1 Fe(2+) ion per subunit.</text>
</comment>
<comment type="subcellular location">
    <subcellularLocation>
        <location evidence="1">Cytoplasm</location>
    </subcellularLocation>
</comment>
<comment type="similarity">
    <text evidence="1">Belongs to the KAE1 / TsaD family.</text>
</comment>
<dbReference type="EC" id="2.3.1.234" evidence="1"/>
<dbReference type="EMBL" id="CU179680">
    <property type="protein sequence ID" value="CAL59021.1"/>
    <property type="molecule type" value="Genomic_DNA"/>
</dbReference>
<dbReference type="RefSeq" id="WP_011949497.1">
    <property type="nucleotide sequence ID" value="NC_009497.1"/>
</dbReference>
<dbReference type="SMR" id="A5IYB2"/>
<dbReference type="STRING" id="347257.MAG3230"/>
<dbReference type="GeneID" id="93358086"/>
<dbReference type="KEGG" id="maa:MAG3230"/>
<dbReference type="HOGENOM" id="CLU_023208_0_1_14"/>
<dbReference type="Proteomes" id="UP000007065">
    <property type="component" value="Chromosome"/>
</dbReference>
<dbReference type="GO" id="GO:0005737">
    <property type="term" value="C:cytoplasm"/>
    <property type="evidence" value="ECO:0007669"/>
    <property type="project" value="UniProtKB-SubCell"/>
</dbReference>
<dbReference type="GO" id="GO:0005506">
    <property type="term" value="F:iron ion binding"/>
    <property type="evidence" value="ECO:0007669"/>
    <property type="project" value="UniProtKB-UniRule"/>
</dbReference>
<dbReference type="GO" id="GO:0061711">
    <property type="term" value="F:N(6)-L-threonylcarbamoyladenine synthase activity"/>
    <property type="evidence" value="ECO:0007669"/>
    <property type="project" value="UniProtKB-EC"/>
</dbReference>
<dbReference type="GO" id="GO:0002949">
    <property type="term" value="P:tRNA threonylcarbamoyladenosine modification"/>
    <property type="evidence" value="ECO:0007669"/>
    <property type="project" value="UniProtKB-UniRule"/>
</dbReference>
<dbReference type="FunFam" id="3.30.420.40:FF:000040">
    <property type="entry name" value="tRNA N6-adenosine threonylcarbamoyltransferase"/>
    <property type="match status" value="1"/>
</dbReference>
<dbReference type="Gene3D" id="3.30.420.40">
    <property type="match status" value="2"/>
</dbReference>
<dbReference type="HAMAP" id="MF_01445">
    <property type="entry name" value="TsaD"/>
    <property type="match status" value="1"/>
</dbReference>
<dbReference type="InterPro" id="IPR043129">
    <property type="entry name" value="ATPase_NBD"/>
</dbReference>
<dbReference type="InterPro" id="IPR000905">
    <property type="entry name" value="Gcp-like_dom"/>
</dbReference>
<dbReference type="InterPro" id="IPR017861">
    <property type="entry name" value="KAE1/TsaD"/>
</dbReference>
<dbReference type="InterPro" id="IPR022450">
    <property type="entry name" value="TsaD"/>
</dbReference>
<dbReference type="NCBIfam" id="TIGR00329">
    <property type="entry name" value="gcp_kae1"/>
    <property type="match status" value="1"/>
</dbReference>
<dbReference type="NCBIfam" id="TIGR03723">
    <property type="entry name" value="T6A_TsaD_YgjD"/>
    <property type="match status" value="1"/>
</dbReference>
<dbReference type="PANTHER" id="PTHR11735">
    <property type="entry name" value="TRNA N6-ADENOSINE THREONYLCARBAMOYLTRANSFERASE"/>
    <property type="match status" value="1"/>
</dbReference>
<dbReference type="PANTHER" id="PTHR11735:SF6">
    <property type="entry name" value="TRNA N6-ADENOSINE THREONYLCARBAMOYLTRANSFERASE, MITOCHONDRIAL"/>
    <property type="match status" value="1"/>
</dbReference>
<dbReference type="Pfam" id="PF00814">
    <property type="entry name" value="TsaD"/>
    <property type="match status" value="1"/>
</dbReference>
<dbReference type="PRINTS" id="PR00789">
    <property type="entry name" value="OSIALOPTASE"/>
</dbReference>
<dbReference type="SUPFAM" id="SSF53067">
    <property type="entry name" value="Actin-like ATPase domain"/>
    <property type="match status" value="2"/>
</dbReference>
<reference key="1">
    <citation type="journal article" date="2007" name="PLoS Genet.">
        <title>Being pathogenic, plastic, and sexual while living with a nearly minimal bacterial genome.</title>
        <authorList>
            <person name="Sirand-Pugnet P."/>
            <person name="Lartigue C."/>
            <person name="Marenda M."/>
            <person name="Jacob D."/>
            <person name="Barre A."/>
            <person name="Barbe V."/>
            <person name="Schenowitz C."/>
            <person name="Mangenot S."/>
            <person name="Couloux A."/>
            <person name="Segurens B."/>
            <person name="de Daruvar A."/>
            <person name="Blanchard A."/>
            <person name="Citti C."/>
        </authorList>
    </citation>
    <scope>NUCLEOTIDE SEQUENCE [LARGE SCALE GENOMIC DNA]</scope>
    <source>
        <strain>NCTC 10123 / CIP 59.7 / PG2</strain>
    </source>
</reference>
<organism>
    <name type="scientific">Mycoplasmopsis agalactiae (strain NCTC 10123 / CIP 59.7 / PG2)</name>
    <name type="common">Mycoplasma agalactiae</name>
    <dbReference type="NCBI Taxonomy" id="347257"/>
    <lineage>
        <taxon>Bacteria</taxon>
        <taxon>Bacillati</taxon>
        <taxon>Mycoplasmatota</taxon>
        <taxon>Mycoplasmoidales</taxon>
        <taxon>Metamycoplasmataceae</taxon>
        <taxon>Mycoplasmopsis</taxon>
    </lineage>
</organism>